<name>VE4_BPV2</name>
<gene>
    <name type="primary">E4</name>
</gene>
<feature type="chain" id="PRO_0000133252" description="Probable protein E4">
    <location>
        <begin position="1"/>
        <end position="106"/>
    </location>
</feature>
<feature type="region of interest" description="Disordered" evidence="2">
    <location>
        <begin position="1"/>
        <end position="40"/>
    </location>
</feature>
<feature type="compositionally biased region" description="Basic and acidic residues" evidence="2">
    <location>
        <begin position="1"/>
        <end position="27"/>
    </location>
</feature>
<feature type="compositionally biased region" description="Low complexity" evidence="2">
    <location>
        <begin position="28"/>
        <end position="37"/>
    </location>
</feature>
<keyword id="KW-0244">Early protein</keyword>
<keyword id="KW-1035">Host cytoplasm</keyword>
<keyword id="KW-1079">Host G2/M cell cycle arrest by virus</keyword>
<keyword id="KW-1048">Host nucleus</keyword>
<keyword id="KW-0945">Host-virus interaction</keyword>
<keyword id="KW-1121">Modulation of host cell cycle by virus</keyword>
<keyword id="KW-0597">Phosphoprotein</keyword>
<organism>
    <name type="scientific">Bos taurus papillomavirus 2</name>
    <name type="common">Bovine papillomavirus 2</name>
    <dbReference type="NCBI Taxonomy" id="2758382"/>
    <lineage>
        <taxon>Viruses</taxon>
        <taxon>Monodnaviria</taxon>
        <taxon>Shotokuvirae</taxon>
        <taxon>Cossaviricota</taxon>
        <taxon>Papovaviricetes</taxon>
        <taxon>Zurhausenvirales</taxon>
        <taxon>Papillomaviridae</taxon>
        <taxon>Firstpapillomavirinae</taxon>
        <taxon>Deltapapillomavirus</taxon>
        <taxon>Bovine papillomavirus type 1</taxon>
    </lineage>
</organism>
<sequence length="106" mass="12111">MANDKEIAQTEFPHQKDLKETLQEKKPSQPSLSLLCSAPPPAYPSEQASVGYGTVLARTPTIFLQARGALFSALPPPRCRARYRWTWHQGRKKKKINRPTQQRRNL</sequence>
<dbReference type="EMBL" id="M20219">
    <property type="protein sequence ID" value="AAA66836.1"/>
    <property type="molecule type" value="Genomic_DNA"/>
</dbReference>
<dbReference type="PIR" id="F31169">
    <property type="entry name" value="W4WLB2"/>
</dbReference>
<dbReference type="Proteomes" id="UP000007612">
    <property type="component" value="Segment"/>
</dbReference>
<dbReference type="GO" id="GO:0030430">
    <property type="term" value="C:host cell cytoplasm"/>
    <property type="evidence" value="ECO:0007669"/>
    <property type="project" value="UniProtKB-SubCell"/>
</dbReference>
<dbReference type="GO" id="GO:0042025">
    <property type="term" value="C:host cell nucleus"/>
    <property type="evidence" value="ECO:0007669"/>
    <property type="project" value="UniProtKB-SubCell"/>
</dbReference>
<dbReference type="GO" id="GO:0039592">
    <property type="term" value="P:symbiont-mediated arrest of host cell cycle during G2/M transition"/>
    <property type="evidence" value="ECO:0007669"/>
    <property type="project" value="UniProtKB-KW"/>
</dbReference>
<reference key="1">
    <citation type="submission" date="1988-05" db="EMBL/GenBank/DDBJ databases">
        <authorList>
            <person name="Groff D.E."/>
            <person name="Mitra R."/>
            <person name="Lancaster W.D."/>
        </authorList>
    </citation>
    <scope>NUCLEOTIDE SEQUENCE [GENOMIC DNA]</scope>
</reference>
<evidence type="ECO:0000250" key="1">
    <source>
        <dbReference type="UniProtKB" id="P06922"/>
    </source>
</evidence>
<evidence type="ECO:0000256" key="2">
    <source>
        <dbReference type="SAM" id="MobiDB-lite"/>
    </source>
</evidence>
<evidence type="ECO:0000305" key="3"/>
<organismHost>
    <name type="scientific">Bos taurus</name>
    <name type="common">Bovine</name>
    <dbReference type="NCBI Taxonomy" id="9913"/>
</organismHost>
<comment type="function">
    <text evidence="1">Contributes to multiple aspects of the viral life cycle including viral genome amplification, suppression of suprabasal cell differentiation and egress of newly formed virions. Induces host cell cycle arrest at the G2 phase by associating with and preventing the nuclear entry of host CDK1/cyclin B1 complexes. Inhibits cellular DNA replication by preventing loading of host replication licensing proteins MCM2 and MCM7 onto chromatin. Within the cytoplasm, associates with host kinase SRPK1, a splicing factor regulator, and inhibits its activity. Therefore, E4 favors expression of late viral transcripts by inhibiting SRPK1-mediated phosphorylation of host serine-arginine (SR) proteins that have critical roles in mRNA metabolism. Late in the infectious cycle, E4 also acts to diminish the integrity of the keratinocyte by disrupting the keratin cytoskeleton and inducing apoptosis through alteration of mitochondrial function to facilitate egress of the newly formed virions.</text>
</comment>
<comment type="subunit">
    <text evidence="1">Assembles into oligomeric complexes. Interacts with host CDK1. Interacts with host SRPK1; this interaction may favor expression of late viral transcripts. Interacts with host cytokeratin components KRT8 and KRT18.</text>
</comment>
<comment type="subcellular location">
    <subcellularLocation>
        <location evidence="1">Host cytoplasm</location>
    </subcellularLocation>
    <subcellularLocation>
        <location evidence="1">Host nucleus</location>
    </subcellularLocation>
</comment>
<comment type="PTM">
    <text evidence="1">Phosphorylated by host ERK. The phosphorylation triggers a structural change that enhances keratin binding and protein stability.</text>
</comment>
<comment type="miscellaneous">
    <text evidence="1">The major E4 form is first synthesized as an E1^E4 fusion protein from spliced E1^E4 transcripts, such that the first few amino acids of the E4 protein are derived from the N terminus of E1.</text>
</comment>
<comment type="similarity">
    <text evidence="3">Belongs to the papillomaviridae E4 protein family.</text>
</comment>
<protein>
    <recommendedName>
        <fullName>Probable protein E4</fullName>
    </recommendedName>
</protein>
<proteinExistence type="inferred from homology"/>
<accession>P11301</accession>